<keyword id="KW-1185">Reference proteome</keyword>
<proteinExistence type="inferred from homology"/>
<comment type="similarity">
    <text evidence="1">Belongs to the UPF0597 family.</text>
</comment>
<comment type="sequence caution" evidence="2">
    <conflict type="erroneous initiation">
        <sequence resource="EMBL-CDS" id="ABK37924"/>
    </conflict>
</comment>
<name>Y4077_AERHH</name>
<gene>
    <name type="ordered locus">AHA_4077</name>
</gene>
<protein>
    <recommendedName>
        <fullName evidence="1">UPF0597 protein AHA_4077</fullName>
    </recommendedName>
</protein>
<feature type="chain" id="PRO_0000339780" description="UPF0597 protein AHA_4077">
    <location>
        <begin position="1"/>
        <end position="435"/>
    </location>
</feature>
<sequence>MRHIAMKAQWTDFITLLKREVVPALGCTEPMSVALAAANCRKLLGQVPTRVSVWVSGNLFKNGMGVGVPGTGMIGLPVAAAVGITGGNPDAGLEVLKALTPAQVEEAKVLLPAIKVDVKDVPDVLYAEVLAQVEGHSARVVICTDHTRIILMERDGEVLMAQDSAPGVQIQAAPSSKPAMTLREIVEFALQVPLAEIDFIREAATMNQALADEGLQGYGLRIGKILTEQVERKLLSDDLMTLAMRLSSAASDARMDGAMLPAMSNSGSGNQGIAATMPVVAAARFLQASDEQLTRALVMSHLVAIYIKTYQNKLSALCAASTAAMGAGAAITWLLGGQFEQISHCINNMIGDVSGIICDGAGSACSMKVSTSTSAAVKSSLMAINNLHVPQSEGIVSDDVDQTIANLGRLSKQGMLDTDIEIINIMRAKQQGKAE</sequence>
<dbReference type="EMBL" id="CP000462">
    <property type="protein sequence ID" value="ABK37924.1"/>
    <property type="status" value="ALT_INIT"/>
    <property type="molecule type" value="Genomic_DNA"/>
</dbReference>
<dbReference type="RefSeq" id="WP_164927762.1">
    <property type="nucleotide sequence ID" value="NC_008570.1"/>
</dbReference>
<dbReference type="RefSeq" id="YP_858502.1">
    <property type="nucleotide sequence ID" value="NC_008570.1"/>
</dbReference>
<dbReference type="SMR" id="A0KQF1"/>
<dbReference type="STRING" id="380703.AHA_4077"/>
<dbReference type="EnsemblBacteria" id="ABK37924">
    <property type="protein sequence ID" value="ABK37924"/>
    <property type="gene ID" value="AHA_4077"/>
</dbReference>
<dbReference type="GeneID" id="4487449"/>
<dbReference type="KEGG" id="aha:AHA_4077"/>
<dbReference type="PATRIC" id="fig|380703.7.peg.4033"/>
<dbReference type="eggNOG" id="COG3681">
    <property type="taxonomic scope" value="Bacteria"/>
</dbReference>
<dbReference type="HOGENOM" id="CLU_051840_0_0_6"/>
<dbReference type="OrthoDB" id="41906at2"/>
<dbReference type="Proteomes" id="UP000000756">
    <property type="component" value="Chromosome"/>
</dbReference>
<dbReference type="GO" id="GO:0080146">
    <property type="term" value="F:L-cysteine desulfhydrase activity"/>
    <property type="evidence" value="ECO:0007669"/>
    <property type="project" value="TreeGrafter"/>
</dbReference>
<dbReference type="GO" id="GO:0019450">
    <property type="term" value="P:L-cysteine catabolic process to pyruvate"/>
    <property type="evidence" value="ECO:0007669"/>
    <property type="project" value="TreeGrafter"/>
</dbReference>
<dbReference type="HAMAP" id="MF_01845">
    <property type="entry name" value="UPF0597"/>
    <property type="match status" value="1"/>
</dbReference>
<dbReference type="InterPro" id="IPR005130">
    <property type="entry name" value="Ser_deHydtase-like_asu"/>
</dbReference>
<dbReference type="InterPro" id="IPR021144">
    <property type="entry name" value="UPF0597"/>
</dbReference>
<dbReference type="PANTHER" id="PTHR30501">
    <property type="entry name" value="UPF0597 PROTEIN YHAM"/>
    <property type="match status" value="1"/>
</dbReference>
<dbReference type="PANTHER" id="PTHR30501:SF2">
    <property type="entry name" value="UPF0597 PROTEIN YHAM"/>
    <property type="match status" value="1"/>
</dbReference>
<dbReference type="Pfam" id="PF03313">
    <property type="entry name" value="SDH_alpha"/>
    <property type="match status" value="1"/>
</dbReference>
<dbReference type="PIRSF" id="PIRSF006054">
    <property type="entry name" value="UCP006054"/>
    <property type="match status" value="1"/>
</dbReference>
<organism>
    <name type="scientific">Aeromonas hydrophila subsp. hydrophila (strain ATCC 7966 / DSM 30187 / BCRC 13018 / CCUG 14551 / JCM 1027 / KCTC 2358 / NCIMB 9240 / NCTC 8049)</name>
    <dbReference type="NCBI Taxonomy" id="380703"/>
    <lineage>
        <taxon>Bacteria</taxon>
        <taxon>Pseudomonadati</taxon>
        <taxon>Pseudomonadota</taxon>
        <taxon>Gammaproteobacteria</taxon>
        <taxon>Aeromonadales</taxon>
        <taxon>Aeromonadaceae</taxon>
        <taxon>Aeromonas</taxon>
    </lineage>
</organism>
<evidence type="ECO:0000255" key="1">
    <source>
        <dbReference type="HAMAP-Rule" id="MF_01845"/>
    </source>
</evidence>
<evidence type="ECO:0000305" key="2"/>
<accession>A0KQF1</accession>
<reference key="1">
    <citation type="journal article" date="2006" name="J. Bacteriol.">
        <title>Genome sequence of Aeromonas hydrophila ATCC 7966T: jack of all trades.</title>
        <authorList>
            <person name="Seshadri R."/>
            <person name="Joseph S.W."/>
            <person name="Chopra A.K."/>
            <person name="Sha J."/>
            <person name="Shaw J."/>
            <person name="Graf J."/>
            <person name="Haft D.H."/>
            <person name="Wu M."/>
            <person name="Ren Q."/>
            <person name="Rosovitz M.J."/>
            <person name="Madupu R."/>
            <person name="Tallon L."/>
            <person name="Kim M."/>
            <person name="Jin S."/>
            <person name="Vuong H."/>
            <person name="Stine O.C."/>
            <person name="Ali A."/>
            <person name="Horneman A.J."/>
            <person name="Heidelberg J.F."/>
        </authorList>
    </citation>
    <scope>NUCLEOTIDE SEQUENCE [LARGE SCALE GENOMIC DNA]</scope>
    <source>
        <strain>ATCC 7966 / DSM 30187 / BCRC 13018 / CCUG 14551 / JCM 1027 / KCTC 2358 / NCIMB 9240 / NCTC 8049</strain>
    </source>
</reference>